<evidence type="ECO:0000255" key="1">
    <source>
        <dbReference type="HAMAP-Rule" id="MF_00289"/>
    </source>
</evidence>
<evidence type="ECO:0000269" key="2">
    <source>
    </source>
</evidence>
<evidence type="ECO:0000269" key="3">
    <source>
    </source>
</evidence>
<evidence type="ECO:0000269" key="4">
    <source>
    </source>
</evidence>
<evidence type="ECO:0000269" key="5">
    <source>
    </source>
</evidence>
<feature type="chain" id="PRO_0000383483" description="Proteasome subunit alpha">
    <location>
        <begin position="1"/>
        <end position="246"/>
    </location>
</feature>
<sequence length="246" mass="26915">MSFPYFISPEQAMRERSELARKGIARGRSVVALAYSEGVLFVAENPSRSLQKVSELYDRVGFAAVGRFNEFDNLRRGGIQFADTRGYAYDRRDVTGRQLANVYAQTLGTIFTEQAKPYEVELCVAEVAHYGETKAPELYRITYDGSIADEPHFVVMGGTTEPIIAALNESYTENASLQDAVEIAVKALSASAEGAEPRSLGPSTLEVAILDAGRPRRAFRRITGAALEALLPEQPQQADSGDKPTE</sequence>
<name>PSA_MYCS2</name>
<organism>
    <name type="scientific">Mycolicibacterium smegmatis (strain ATCC 700084 / mc(2)155)</name>
    <name type="common">Mycobacterium smegmatis</name>
    <dbReference type="NCBI Taxonomy" id="246196"/>
    <lineage>
        <taxon>Bacteria</taxon>
        <taxon>Bacillati</taxon>
        <taxon>Actinomycetota</taxon>
        <taxon>Actinomycetes</taxon>
        <taxon>Mycobacteriales</taxon>
        <taxon>Mycobacteriaceae</taxon>
        <taxon>Mycolicibacterium</taxon>
    </lineage>
</organism>
<comment type="function">
    <text evidence="1 2 3 5">Component of the proteasome core, a large protease complex with broad specificity involved in protein degradation. The M.smegmatis proteasome is able to cleave oligopeptides after hydrophobic residues, thus displaying chymotrypsin-like activity. In complex with the ATPase Mpa, degrades protein targets conjugated to a prokaryotic ubiquitin-like protein (Pup). Identified substrates of the M.smegmatis proteasome are the pupylated SodA and Ino1 proteins (PubMed:19028679). The Pup-proteasome system (PPS) is essential for survival under starvation; PPS likely functions to recycle amino acids under nitrogen starvation, thereby enabling the cell to maintain basal metabolic activities (PubMed:24986881).</text>
</comment>
<comment type="activity regulation">
    <text evidence="1 3 5">The formation of the proteasomal ATPase ARC-20S proteasome complex, likely via the docking of the C-termini of ARC into the intersubunit pockets in the alpha-rings, may trigger opening of the gate for substrate entry. Interconversion between the open-gate and close-gate conformations leads to a dynamic regulation of the 20S proteasome proteolysis activity (By similarity). PPS auto-regulates its own activity via pupylation and degradation of its components (PubMed:24986881). Peptidolytic activity is inhibited by N-acetyl-Leu-Leu-norleucinal (Ac-LLnL) in vitro (PubMed:9282749).</text>
</comment>
<comment type="pathway">
    <text evidence="1">Protein degradation; proteasomal Pup-dependent pathway.</text>
</comment>
<comment type="subunit">
    <text evidence="1 4">The 20S proteasome core is composed of 14 alpha and 14 beta subunits that assemble into four stacked heptameric rings, resulting in a barrel-shaped structure. The two inner rings, each composed of seven catalytic beta subunits, are sandwiched by two outer rings, each composed of seven alpha subunits. The catalytic chamber with the active sites is on the inside of the barrel. Has a gated structure, the ends of the cylinder being occluded by the N-termini of the alpha-subunits. Is capped by the proteasome-associated ATPase, ARC. Can also interact with the bacterial proteasome activator Bpa through the C-terminal hydrophobic-tyrosine-X motif (HbYX motif) of Bpa; Bpa forms a homooligomeric ring-like structure which stacks co-axially with the proteasomal alpha-rings (PubMed:25469515).</text>
</comment>
<comment type="subcellular location">
    <subcellularLocation>
        <location evidence="1">Cytoplasm</location>
    </subcellularLocation>
</comment>
<comment type="induction">
    <text evidence="3">Up-regulated under nitrogen starvation (at protein level).</text>
</comment>
<comment type="PTM">
    <text evidence="3">Pupylated at an undetermined lysine residue by the prokaryotic ubiquitin-like protein Pup with the help of the ligase PafA, which leads to its degradation by the proteasome and thereby constitutes a negative auto-regulation.</text>
</comment>
<comment type="disruption phenotype">
    <text evidence="2 3 5">Cells lacking this gene are viable and grow at the wild-type rate, but show a large reduction in the rate of degradation of the pupylated substrates (PubMed:19028679, PubMed:9282749). Cells lacking the Pup-proteasome system (pup/prcS, prcA and prcB) completely lack pupylated proteins and intact proteasomes; they grow as well as wild-type during the exponential phase, but they show reduced survival after prolonged incubation at stationary phase (17 days after inoculation) and become hypersensitive to nitrogen limitation, and, to a lesser extent, to carbon limitation (PubMed:24986881).</text>
</comment>
<comment type="similarity">
    <text evidence="1">Belongs to the peptidase T1A family.</text>
</comment>
<reference key="1">
    <citation type="journal article" date="1997" name="Mol. Microbiol.">
        <title>Inactivation of the 20S proteasome in Mycobacterium smegmatis.</title>
        <authorList>
            <person name="Knipfer N."/>
            <person name="Shrader T.E."/>
        </authorList>
    </citation>
    <scope>NUCLEOTIDE SEQUENCE [GENOMIC DNA]</scope>
    <scope>FUNCTION</scope>
    <scope>CATALYTIC ACTIVITY</scope>
    <scope>ACTIVITY REGULATION</scope>
    <scope>DISRUPTION PHENOTYPE</scope>
</reference>
<reference key="2">
    <citation type="submission" date="2006-10" db="EMBL/GenBank/DDBJ databases">
        <authorList>
            <person name="Fleischmann R.D."/>
            <person name="Dodson R.J."/>
            <person name="Haft D.H."/>
            <person name="Merkel J.S."/>
            <person name="Nelson W.C."/>
            <person name="Fraser C.M."/>
        </authorList>
    </citation>
    <scope>NUCLEOTIDE SEQUENCE [LARGE SCALE GENOMIC DNA]</scope>
    <source>
        <strain>ATCC 700084 / mc(2)155</strain>
    </source>
</reference>
<reference key="3">
    <citation type="journal article" date="2007" name="Genome Biol.">
        <title>Interrupted coding sequences in Mycobacterium smegmatis: authentic mutations or sequencing errors?</title>
        <authorList>
            <person name="Deshayes C."/>
            <person name="Perrodou E."/>
            <person name="Gallien S."/>
            <person name="Euphrasie D."/>
            <person name="Schaeffer C."/>
            <person name="Van-Dorsselaer A."/>
            <person name="Poch O."/>
            <person name="Lecompte O."/>
            <person name="Reyrat J.-M."/>
        </authorList>
    </citation>
    <scope>NUCLEOTIDE SEQUENCE [LARGE SCALE GENOMIC DNA]</scope>
    <source>
        <strain>ATCC 700084 / mc(2)155</strain>
    </source>
</reference>
<reference key="4">
    <citation type="journal article" date="2009" name="Genome Res.">
        <title>Ortho-proteogenomics: multiple proteomes investigation through orthology and a new MS-based protocol.</title>
        <authorList>
            <person name="Gallien S."/>
            <person name="Perrodou E."/>
            <person name="Carapito C."/>
            <person name="Deshayes C."/>
            <person name="Reyrat J.-M."/>
            <person name="Van Dorsselaer A."/>
            <person name="Poch O."/>
            <person name="Schaeffer C."/>
            <person name="Lecompte O."/>
        </authorList>
    </citation>
    <scope>NUCLEOTIDE SEQUENCE [LARGE SCALE GENOMIC DNA]</scope>
    <source>
        <strain>ATCC 700084 / mc(2)155</strain>
    </source>
</reference>
<reference key="5">
    <citation type="journal article" date="2009" name="J. Biol. Chem.">
        <title>Proteasomal protein degradation in mycobacteria is dependent upon a prokaryotic ubiquitin-like protein.</title>
        <authorList>
            <person name="Burns K.E."/>
            <person name="Liu W.-T."/>
            <person name="Boshoff H.I.M."/>
            <person name="Dorrestein P.C."/>
            <person name="Barry C.E. III"/>
        </authorList>
    </citation>
    <scope>FUNCTION</scope>
    <scope>CATALYTIC ACTIVITY</scope>
    <scope>PROTEIN SUBSTRATES</scope>
    <scope>DISRUPTION PHENOTYPE</scope>
</reference>
<reference key="6">
    <citation type="journal article" date="2014" name="EMBO J.">
        <title>Survival of mycobacteria depends on proteasome-mediated amino acid recycling under nutrient limitation.</title>
        <authorList>
            <person name="Elharar Y."/>
            <person name="Roth Z."/>
            <person name="Hermelin I."/>
            <person name="Moon A."/>
            <person name="Peretz G."/>
            <person name="Shenkerman Y."/>
            <person name="Vishkautzan M."/>
            <person name="Khalaila I."/>
            <person name="Gur E."/>
        </authorList>
    </citation>
    <scope>FUNCTION</scope>
    <scope>DISRUPTION PHENOTYPE</scope>
    <scope>ACTIVITY REGULATION</scope>
    <scope>INDUCTION</scope>
    <scope>PUPYLATION</scope>
    <source>
        <strain>ATCC 700084 / mc(2)155</strain>
    </source>
</reference>
<reference key="7">
    <citation type="journal article" date="2014" name="PLoS ONE">
        <title>Bacterial proteasome activator Bpa (Rv3780) is a novel ring-shaped interactor of the mycobacterial proteasome.</title>
        <authorList>
            <person name="Delley C.L."/>
            <person name="Laederach J."/>
            <person name="Ziemski M."/>
            <person name="Bolten M."/>
            <person name="Boehringer D."/>
            <person name="Weber-Ban E."/>
        </authorList>
    </citation>
    <scope>INTERACTION WITH BPA</scope>
    <source>
        <strain>ATCC 700084 / mc(2)155</strain>
    </source>
</reference>
<protein>
    <recommendedName>
        <fullName evidence="1">Proteasome subunit alpha</fullName>
    </recommendedName>
    <alternativeName>
        <fullName evidence="1">20S proteasome alpha subunit</fullName>
    </alternativeName>
    <alternativeName>
        <fullName evidence="1">Proteasome core protein PrcA</fullName>
    </alternativeName>
</protein>
<dbReference type="EMBL" id="AF009645">
    <property type="protein sequence ID" value="AAC45615.1"/>
    <property type="molecule type" value="Genomic_DNA"/>
</dbReference>
<dbReference type="EMBL" id="CP000480">
    <property type="protein sequence ID" value="ABK70795.1"/>
    <property type="molecule type" value="Genomic_DNA"/>
</dbReference>
<dbReference type="EMBL" id="CP001663">
    <property type="protein sequence ID" value="AFP40262.1"/>
    <property type="molecule type" value="Genomic_DNA"/>
</dbReference>
<dbReference type="RefSeq" id="WP_003895345.1">
    <property type="nucleotide sequence ID" value="NZ_SIJM01000005.1"/>
</dbReference>
<dbReference type="RefSeq" id="YP_888184.1">
    <property type="nucleotide sequence ID" value="NC_008596.1"/>
</dbReference>
<dbReference type="SMR" id="A0QZ46"/>
<dbReference type="STRING" id="246196.MSMEG_3894"/>
<dbReference type="MEROPS" id="T01.980"/>
<dbReference type="PaxDb" id="246196-MSMEI_3804"/>
<dbReference type="GeneID" id="93458633"/>
<dbReference type="KEGG" id="msb:LJ00_19345"/>
<dbReference type="KEGG" id="msg:MSMEI_3804"/>
<dbReference type="KEGG" id="msm:MSMEG_3894"/>
<dbReference type="PATRIC" id="fig|246196.19.peg.3834"/>
<dbReference type="eggNOG" id="COG0638">
    <property type="taxonomic scope" value="Bacteria"/>
</dbReference>
<dbReference type="OrthoDB" id="9775643at2"/>
<dbReference type="UniPathway" id="UPA00997"/>
<dbReference type="Proteomes" id="UP000000757">
    <property type="component" value="Chromosome"/>
</dbReference>
<dbReference type="Proteomes" id="UP000006158">
    <property type="component" value="Chromosome"/>
</dbReference>
<dbReference type="GO" id="GO:0005737">
    <property type="term" value="C:cytoplasm"/>
    <property type="evidence" value="ECO:0007669"/>
    <property type="project" value="UniProtKB-SubCell"/>
</dbReference>
<dbReference type="GO" id="GO:0019773">
    <property type="term" value="C:proteasome core complex, alpha-subunit complex"/>
    <property type="evidence" value="ECO:0000250"/>
    <property type="project" value="UniProtKB"/>
</dbReference>
<dbReference type="GO" id="GO:0004298">
    <property type="term" value="F:threonine-type endopeptidase activity"/>
    <property type="evidence" value="ECO:0007669"/>
    <property type="project" value="InterPro"/>
</dbReference>
<dbReference type="GO" id="GO:0019941">
    <property type="term" value="P:modification-dependent protein catabolic process"/>
    <property type="evidence" value="ECO:0007669"/>
    <property type="project" value="UniProtKB-UniRule"/>
</dbReference>
<dbReference type="GO" id="GO:0010498">
    <property type="term" value="P:proteasomal protein catabolic process"/>
    <property type="evidence" value="ECO:0007669"/>
    <property type="project" value="UniProtKB-UniRule"/>
</dbReference>
<dbReference type="CDD" id="cd01906">
    <property type="entry name" value="proteasome_protease_HslV"/>
    <property type="match status" value="1"/>
</dbReference>
<dbReference type="FunFam" id="3.60.20.10:FF:000023">
    <property type="entry name" value="Proteasome subunit alpha"/>
    <property type="match status" value="1"/>
</dbReference>
<dbReference type="Gene3D" id="3.60.20.10">
    <property type="entry name" value="Glutamine Phosphoribosylpyrophosphate, subunit 1, domain 1"/>
    <property type="match status" value="1"/>
</dbReference>
<dbReference type="HAMAP" id="MF_00289_B">
    <property type="entry name" value="Proteasome_A_B"/>
    <property type="match status" value="1"/>
</dbReference>
<dbReference type="InterPro" id="IPR029055">
    <property type="entry name" value="Ntn_hydrolases_N"/>
</dbReference>
<dbReference type="InterPro" id="IPR050115">
    <property type="entry name" value="Proteasome_alpha"/>
</dbReference>
<dbReference type="InterPro" id="IPR023332">
    <property type="entry name" value="Proteasome_alpha-type"/>
</dbReference>
<dbReference type="InterPro" id="IPR022296">
    <property type="entry name" value="Proteasome_asu_bac"/>
</dbReference>
<dbReference type="InterPro" id="IPR001353">
    <property type="entry name" value="Proteasome_sua/b"/>
</dbReference>
<dbReference type="NCBIfam" id="TIGR03691">
    <property type="entry name" value="20S_bact_alpha"/>
    <property type="match status" value="1"/>
</dbReference>
<dbReference type="PANTHER" id="PTHR11599">
    <property type="entry name" value="PROTEASOME SUBUNIT ALPHA/BETA"/>
    <property type="match status" value="1"/>
</dbReference>
<dbReference type="Pfam" id="PF00227">
    <property type="entry name" value="Proteasome"/>
    <property type="match status" value="1"/>
</dbReference>
<dbReference type="SUPFAM" id="SSF56235">
    <property type="entry name" value="N-terminal nucleophile aminohydrolases (Ntn hydrolases)"/>
    <property type="match status" value="1"/>
</dbReference>
<dbReference type="PROSITE" id="PS51475">
    <property type="entry name" value="PROTEASOME_ALPHA_2"/>
    <property type="match status" value="1"/>
</dbReference>
<proteinExistence type="evidence at protein level"/>
<gene>
    <name evidence="1" type="primary">prcA</name>
    <name type="ordered locus">MSMEG_3894</name>
    <name type="ordered locus">MSMEI_3804</name>
</gene>
<keyword id="KW-0963">Cytoplasm</keyword>
<keyword id="KW-0647">Proteasome</keyword>
<keyword id="KW-1185">Reference proteome</keyword>
<keyword id="KW-0832">Ubl conjugation</keyword>
<accession>A0QZ46</accession>
<accession>I7G3V1</accession>
<accession>O30519</accession>